<sequence length="1840" mass="183987">MDVHTRWKAPRPGAPLLSSPLLLLLLLLWAPPPSRAAQPTDLLEMLDFHNLPSGVTKTTGFCATRRSSKEPDVAYRVSKDAQLSMPTKQLYPESDFPEDFSILTTVKAKKGSQAFLVSVYNEQGIQQLGLELGRSPVFLYEDHTGKPGPEEYPLFPGINLSDGKWHRIAISVYKKNVTLILDCKKKITKFLNRGDHPIIDVNGIIMFGSRILDDEIFEGDIQQLLFVSDHRAAYDYCEHYSPDCDTAVPDTPQSQDPNPDEYYPEGEGETYYYEYPYYEDPEDPGKEPAPSQKPVEAARETTEVPEEQTQPPSEAPTVPETSDTAGKEDNPGIGDYDYVPTDDYYTTSPYEDFGYGEGVENPDQPTNPDSGAEIPTSTSVTSNSSNPAPSPEEGKDDLGGEFTEETIKNLDENYYDPYFDPDSDSNVSPSEIGPGMPANQDTIYEGIGGPRGEKGQKGEPAIIEPGMLIEGPPGPEGPAGLPGPPGTTGPTGQMGDPGERGPPGRPGLPGADGLPGPPGTMLMLPFRFGGGGDAGSKGPMVSAQESQAQAILQQARLALRGPAGPMGLTGRPGPMGPPGSGGLKGEPGDMGPQGPRGVQGPPGPTGKPGRRGRAGSDGARGMPGQTGPKGDRGFDGLAGLPGEKGHRGDPGPSGPPGLPGDDGERGDDGEVGPRGLPGEPGPRGLLGPKGPPGPPGPPGVTGMDGQPGPKGNVGPQGEPGPPGQQGNPGAQGLPGPQGAIGPPGEKGPLGKPGLPGMPGADGPPGHPGKEGPPGEKGGQGPPGPQGPIGYPGPRGVKGADGIRGLKGTKGEKGEDGFPGFKGDMGIKGDRGEIGPPGPRGEDGPEGPKGRGGPNGDPGPLGPTGEKGKLGVPGLPGYPGRQGPKGSIGFPGFPGANGEKGGRGTPGKPGPRGQRGPTGPRGERGPRGITGKPGPKGNSGGDGPAGPPGERGPNGPQGPTGFPGPKGPPGPPGKDGLPGHPGQRGETGFQGKTGPPGPPGVVGPQGPTGETGPMGERGHPGPPGPPGEQGLPGAAGKEGTKGDPGPAGLPGKDGPPGLRGFPGDRGLPGPVGALGLKGSEGPPGPPGPAGSPGERGPAGAAGPIGIPGRPGPQGPPGPAGEKGVPGEEGPQGPAGRDGLQGPVGLPGPAGPVGPPGEDGDKGEIGEPGQKGSKGDKGEQGPPGPTGPQGPTGQPGPSGADGEPGPRGQQGLFGQKGDEGSRGFPGPPGPVGLQGLPGPPGEKGETGDVGQMGPPGPPGPRGPSGAPGADGPQGPPGGIGNPGAVGEKGEPGEAGEPGLPGEGGPLGPKGERGEKGEAGPSGAAGPPGPKGPPGDDGPKGSPGPVGFPGDPGPPGEPGPAGQDGPPGDKGDDGEPGQTGSPGPTGEPGPSGPPGKRGPPGPAGPEGRQGEKGAKGEAGLEGPPGKTGPIGPQGAPGKPGPDGLRGIPGPVGEQGLPGSPGPDGPPGPMGPPGLPGLKGDSGPKGEKGHPGLIGLIGPPGEQGEKGDRGLPGPQGSSGPKGEQGITGPSGPLGPPGPPGLPGPPGPKGAKGSSGPTGPKGEAGHPGLPGPPGPPGEVIQPLPIQASRTRRNIDASQLLDDGAGESYVDYADGMEEIFGSLNSLKLEIEQMKRPLGTQQNPARTCKDLQLCHPDFPDGEYWVDPNQGCSRDSFKVYCNFTAGGSTCVFPDKKSEGARITSWPKENPGSWFSEFKRGKLLSYVDAEGNPVGVVQMTFLRLLSASAQQNITYNCYQSVAWQDAATGSYDKAIRFLGSNDEEMSYDNNPYIRALVDGCATKKGYQKTVLEIDTPKVEQVPIVDIMFTDFGEASQKFGFEVGPACFLG</sequence>
<protein>
    <recommendedName>
        <fullName>Collagen alpha-1(V) chain</fullName>
    </recommendedName>
</protein>
<accession>Q9JI03</accession>
<reference key="1">
    <citation type="journal article" date="2000" name="J. Biol. Chem.">
        <title>Schwann cells synthesize type V collagen that contains a novel alpha 4 chain. Molecular cloning, biochemical characterization, and high affinity heparin binding of alpha 4(V) collagen.</title>
        <authorList>
            <person name="Chernousov M.A."/>
            <person name="Rothblum K."/>
            <person name="Tyler W.A."/>
            <person name="Stahl R.C."/>
            <person name="Carey D.J."/>
        </authorList>
    </citation>
    <scope>NUCLEOTIDE SEQUENCE [MRNA]</scope>
    <scope>TISSUE SPECIFICITY</scope>
    <scope>HEPARIN-BINDING</scope>
    <source>
        <strain>Sprague-Dawley</strain>
        <tissue>Schwann cell</tissue>
    </source>
</reference>
<reference key="2">
    <citation type="journal article" date="2012" name="Nat. Commun.">
        <title>Quantitative maps of protein phosphorylation sites across 14 different rat organs and tissues.</title>
        <authorList>
            <person name="Lundby A."/>
            <person name="Secher A."/>
            <person name="Lage K."/>
            <person name="Nordsborg N.B."/>
            <person name="Dmytriyev A."/>
            <person name="Lundby C."/>
            <person name="Olsen J.V."/>
        </authorList>
    </citation>
    <scope>IDENTIFICATION BY MASS SPECTROMETRY [LARGE SCALE ANALYSIS]</scope>
</reference>
<comment type="function">
    <text evidence="1">Type V collagen is a member of group I collagen (fibrillar forming collagen). It is a minor connective tissue component of nearly ubiquitous distribution. Type V collagen binds to DNA, heparan sulfate, thrombospondin, heparin, and insulin (By similarity).</text>
</comment>
<comment type="subunit">
    <text evidence="1">Trimers of two alpha 1(V) and one alpha 2(V) chains in most tissues and trimers of one alpha 1(V), one alpha 2(V), and one alpha 3(V) chains in placenta. Interacts with CSPG4 (By similarity).</text>
</comment>
<comment type="subcellular location">
    <subcellularLocation>
        <location evidence="3">Secreted</location>
        <location evidence="3">Extracellular space</location>
        <location evidence="3">Extracellular matrix</location>
    </subcellularLocation>
</comment>
<comment type="tissue specificity">
    <text evidence="5">A high molecular weight form was detected in Schwann cells and peripheral nerve. A lower, probably processed form, is detected in all other tissues tested (at protein level).</text>
</comment>
<comment type="PTM">
    <text evidence="1">Prolines at the third position of the tripeptide repeating unit (G-X-Y) are hydroxylated in some or all of the chains.</text>
</comment>
<comment type="PTM">
    <text evidence="1">Sulfated on 40% of tyrosines.</text>
</comment>
<comment type="PTM">
    <text evidence="1">Hydroxylation on proline residues within the sequence motif, GXPG, is most likely to be 4-hydroxy as this fits the requirement for 4-hydroxylation in vertebrates.</text>
</comment>
<comment type="similarity">
    <text evidence="3">Belongs to the fibrillar collagen family.</text>
</comment>
<gene>
    <name type="primary">Col5a1</name>
</gene>
<keyword id="KW-0176">Collagen</keyword>
<keyword id="KW-0272">Extracellular matrix</keyword>
<keyword id="KW-0358">Heparin-binding</keyword>
<keyword id="KW-0379">Hydroxylation</keyword>
<keyword id="KW-1185">Reference proteome</keyword>
<keyword id="KW-0677">Repeat</keyword>
<keyword id="KW-0964">Secreted</keyword>
<keyword id="KW-0732">Signal</keyword>
<keyword id="KW-0765">Sulfation</keyword>
<organism>
    <name type="scientific">Rattus norvegicus</name>
    <name type="common">Rat</name>
    <dbReference type="NCBI Taxonomy" id="10116"/>
    <lineage>
        <taxon>Eukaryota</taxon>
        <taxon>Metazoa</taxon>
        <taxon>Chordata</taxon>
        <taxon>Craniata</taxon>
        <taxon>Vertebrata</taxon>
        <taxon>Euteleostomi</taxon>
        <taxon>Mammalia</taxon>
        <taxon>Eutheria</taxon>
        <taxon>Euarchontoglires</taxon>
        <taxon>Glires</taxon>
        <taxon>Rodentia</taxon>
        <taxon>Myomorpha</taxon>
        <taxon>Muroidea</taxon>
        <taxon>Muridae</taxon>
        <taxon>Murinae</taxon>
        <taxon>Rattus</taxon>
    </lineage>
</organism>
<dbReference type="EMBL" id="AF272662">
    <property type="protein sequence ID" value="AAF76433.1"/>
    <property type="molecule type" value="mRNA"/>
</dbReference>
<dbReference type="RefSeq" id="NP_604447.1">
    <property type="nucleotide sequence ID" value="NM_134452.1"/>
</dbReference>
<dbReference type="SMR" id="Q9JI03"/>
<dbReference type="BioGRID" id="250110">
    <property type="interactions" value="2"/>
</dbReference>
<dbReference type="FunCoup" id="Q9JI03">
    <property type="interactions" value="984"/>
</dbReference>
<dbReference type="IntAct" id="Q9JI03">
    <property type="interactions" value="1"/>
</dbReference>
<dbReference type="STRING" id="10116.ENSRNOP00000012334"/>
<dbReference type="GlyGen" id="Q9JI03">
    <property type="glycosylation" value="3 sites"/>
</dbReference>
<dbReference type="PhosphoSitePlus" id="Q9JI03"/>
<dbReference type="PaxDb" id="10116-ENSRNOP00000012334"/>
<dbReference type="GeneID" id="85490"/>
<dbReference type="KEGG" id="rno:85490"/>
<dbReference type="UCSC" id="RGD:70920">
    <property type="organism name" value="rat"/>
</dbReference>
<dbReference type="AGR" id="RGD:70920"/>
<dbReference type="CTD" id="1289"/>
<dbReference type="RGD" id="70920">
    <property type="gene designation" value="Col5a1"/>
</dbReference>
<dbReference type="eggNOG" id="KOG3544">
    <property type="taxonomic scope" value="Eukaryota"/>
</dbReference>
<dbReference type="InParanoid" id="Q9JI03"/>
<dbReference type="OrthoDB" id="8939548at2759"/>
<dbReference type="PhylomeDB" id="Q9JI03"/>
<dbReference type="Reactome" id="R-RNO-1442490">
    <property type="pathway name" value="Collagen degradation"/>
</dbReference>
<dbReference type="Reactome" id="R-RNO-1474244">
    <property type="pathway name" value="Extracellular matrix organization"/>
</dbReference>
<dbReference type="Reactome" id="R-RNO-1650814">
    <property type="pathway name" value="Collagen biosynthesis and modifying enzymes"/>
</dbReference>
<dbReference type="Reactome" id="R-RNO-186797">
    <property type="pathway name" value="Signaling by PDGF"/>
</dbReference>
<dbReference type="Reactome" id="R-RNO-2022090">
    <property type="pathway name" value="Assembly of collagen fibrils and other multimeric structures"/>
</dbReference>
<dbReference type="Reactome" id="R-RNO-216083">
    <property type="pathway name" value="Integrin cell surface interactions"/>
</dbReference>
<dbReference type="Reactome" id="R-RNO-3000171">
    <property type="pathway name" value="Non-integrin membrane-ECM interactions"/>
</dbReference>
<dbReference type="Reactome" id="R-RNO-3000178">
    <property type="pathway name" value="ECM proteoglycans"/>
</dbReference>
<dbReference type="Reactome" id="R-RNO-419037">
    <property type="pathway name" value="NCAM1 interactions"/>
</dbReference>
<dbReference type="Reactome" id="R-RNO-8874081">
    <property type="pathway name" value="MET activates PTK2 signaling"/>
</dbReference>
<dbReference type="Reactome" id="R-RNO-8948216">
    <property type="pathway name" value="Collagen chain trimerization"/>
</dbReference>
<dbReference type="PRO" id="PR:Q9JI03"/>
<dbReference type="Proteomes" id="UP000002494">
    <property type="component" value="Unplaced"/>
</dbReference>
<dbReference type="GO" id="GO:0005604">
    <property type="term" value="C:basement membrane"/>
    <property type="evidence" value="ECO:0000266"/>
    <property type="project" value="RGD"/>
</dbReference>
<dbReference type="GO" id="GO:0005581">
    <property type="term" value="C:collagen trimer"/>
    <property type="evidence" value="ECO:0000266"/>
    <property type="project" value="RGD"/>
</dbReference>
<dbReference type="GO" id="GO:0005588">
    <property type="term" value="C:collagen type V trimer"/>
    <property type="evidence" value="ECO:0000266"/>
    <property type="project" value="RGD"/>
</dbReference>
<dbReference type="GO" id="GO:0062023">
    <property type="term" value="C:collagen-containing extracellular matrix"/>
    <property type="evidence" value="ECO:0000318"/>
    <property type="project" value="GO_Central"/>
</dbReference>
<dbReference type="GO" id="GO:0031012">
    <property type="term" value="C:extracellular matrix"/>
    <property type="evidence" value="ECO:0000266"/>
    <property type="project" value="RGD"/>
</dbReference>
<dbReference type="GO" id="GO:0005615">
    <property type="term" value="C:extracellular space"/>
    <property type="evidence" value="ECO:0000318"/>
    <property type="project" value="GO_Central"/>
</dbReference>
<dbReference type="GO" id="GO:0005201">
    <property type="term" value="F:extracellular matrix structural constituent"/>
    <property type="evidence" value="ECO:0000266"/>
    <property type="project" value="RGD"/>
</dbReference>
<dbReference type="GO" id="GO:0030020">
    <property type="term" value="F:extracellular matrix structural constituent conferring tensile strength"/>
    <property type="evidence" value="ECO:0000318"/>
    <property type="project" value="GO_Central"/>
</dbReference>
<dbReference type="GO" id="GO:0008201">
    <property type="term" value="F:heparin binding"/>
    <property type="evidence" value="ECO:0000314"/>
    <property type="project" value="RGD"/>
</dbReference>
<dbReference type="GO" id="GO:0048407">
    <property type="term" value="F:platelet-derived growth factor binding"/>
    <property type="evidence" value="ECO:0000266"/>
    <property type="project" value="RGD"/>
</dbReference>
<dbReference type="GO" id="GO:0043394">
    <property type="term" value="F:proteoglycan binding"/>
    <property type="evidence" value="ECO:0000266"/>
    <property type="project" value="RGD"/>
</dbReference>
<dbReference type="GO" id="GO:0001568">
    <property type="term" value="P:blood vessel development"/>
    <property type="evidence" value="ECO:0000266"/>
    <property type="project" value="RGD"/>
</dbReference>
<dbReference type="GO" id="GO:0007155">
    <property type="term" value="P:cell adhesion"/>
    <property type="evidence" value="ECO:0000266"/>
    <property type="project" value="RGD"/>
</dbReference>
<dbReference type="GO" id="GO:0016477">
    <property type="term" value="P:cell migration"/>
    <property type="evidence" value="ECO:0000266"/>
    <property type="project" value="RGD"/>
</dbReference>
<dbReference type="GO" id="GO:0032964">
    <property type="term" value="P:collagen biosynthetic process"/>
    <property type="evidence" value="ECO:0000266"/>
    <property type="project" value="RGD"/>
</dbReference>
<dbReference type="GO" id="GO:0030199">
    <property type="term" value="P:collagen fibril organization"/>
    <property type="evidence" value="ECO:0000266"/>
    <property type="project" value="RGD"/>
</dbReference>
<dbReference type="GO" id="GO:0048592">
    <property type="term" value="P:eye morphogenesis"/>
    <property type="evidence" value="ECO:0000266"/>
    <property type="project" value="RGD"/>
</dbReference>
<dbReference type="GO" id="GO:0003007">
    <property type="term" value="P:heart morphogenesis"/>
    <property type="evidence" value="ECO:0000266"/>
    <property type="project" value="RGD"/>
</dbReference>
<dbReference type="GO" id="GO:0045112">
    <property type="term" value="P:integrin biosynthetic process"/>
    <property type="evidence" value="ECO:0000266"/>
    <property type="project" value="RGD"/>
</dbReference>
<dbReference type="GO" id="GO:1903225">
    <property type="term" value="P:negative regulation of endodermal cell differentiation"/>
    <property type="evidence" value="ECO:0000266"/>
    <property type="project" value="RGD"/>
</dbReference>
<dbReference type="GO" id="GO:0051128">
    <property type="term" value="P:regulation of cellular component organization"/>
    <property type="evidence" value="ECO:0000266"/>
    <property type="project" value="RGD"/>
</dbReference>
<dbReference type="GO" id="GO:0043588">
    <property type="term" value="P:skin development"/>
    <property type="evidence" value="ECO:0000266"/>
    <property type="project" value="RGD"/>
</dbReference>
<dbReference type="GO" id="GO:0097435">
    <property type="term" value="P:supramolecular fiber organization"/>
    <property type="evidence" value="ECO:0000266"/>
    <property type="project" value="RGD"/>
</dbReference>
<dbReference type="GO" id="GO:0035989">
    <property type="term" value="P:tendon development"/>
    <property type="evidence" value="ECO:0000266"/>
    <property type="project" value="RGD"/>
</dbReference>
<dbReference type="GO" id="GO:0035313">
    <property type="term" value="P:wound healing, spreading of epidermal cells"/>
    <property type="evidence" value="ECO:0000266"/>
    <property type="project" value="RGD"/>
</dbReference>
<dbReference type="CDD" id="cd00110">
    <property type="entry name" value="LamG"/>
    <property type="match status" value="1"/>
</dbReference>
<dbReference type="FunFam" id="2.60.120.1000:FF:000002">
    <property type="entry name" value="Collagen XI alpha 1 chain"/>
    <property type="match status" value="1"/>
</dbReference>
<dbReference type="FunFam" id="2.60.120.200:FF:000016">
    <property type="entry name" value="Collagen XI alpha 1 chain"/>
    <property type="match status" value="1"/>
</dbReference>
<dbReference type="Gene3D" id="2.60.120.1000">
    <property type="match status" value="1"/>
</dbReference>
<dbReference type="Gene3D" id="2.60.120.200">
    <property type="match status" value="1"/>
</dbReference>
<dbReference type="InterPro" id="IPR008160">
    <property type="entry name" value="Collagen"/>
</dbReference>
<dbReference type="InterPro" id="IPR050149">
    <property type="entry name" value="Collagen_superfamily"/>
</dbReference>
<dbReference type="InterPro" id="IPR013320">
    <property type="entry name" value="ConA-like_dom_sf"/>
</dbReference>
<dbReference type="InterPro" id="IPR000885">
    <property type="entry name" value="Fib_collagen_C"/>
</dbReference>
<dbReference type="InterPro" id="IPR001791">
    <property type="entry name" value="Laminin_G"/>
</dbReference>
<dbReference type="InterPro" id="IPR048287">
    <property type="entry name" value="TSPN-like_N"/>
</dbReference>
<dbReference type="PANTHER" id="PTHR24023">
    <property type="entry name" value="COLLAGEN ALPHA"/>
    <property type="match status" value="1"/>
</dbReference>
<dbReference type="PANTHER" id="PTHR24023:SF1109">
    <property type="entry name" value="COLLAGEN ALPHA-4(IV) CHAIN-LIKE"/>
    <property type="match status" value="1"/>
</dbReference>
<dbReference type="Pfam" id="PF01410">
    <property type="entry name" value="COLFI"/>
    <property type="match status" value="1"/>
</dbReference>
<dbReference type="Pfam" id="PF01391">
    <property type="entry name" value="Collagen"/>
    <property type="match status" value="3"/>
</dbReference>
<dbReference type="Pfam" id="PF02210">
    <property type="entry name" value="Laminin_G_2"/>
    <property type="match status" value="1"/>
</dbReference>
<dbReference type="SMART" id="SM00038">
    <property type="entry name" value="COLFI"/>
    <property type="match status" value="1"/>
</dbReference>
<dbReference type="SMART" id="SM00282">
    <property type="entry name" value="LamG"/>
    <property type="match status" value="1"/>
</dbReference>
<dbReference type="SMART" id="SM00210">
    <property type="entry name" value="TSPN"/>
    <property type="match status" value="1"/>
</dbReference>
<dbReference type="SUPFAM" id="SSF49899">
    <property type="entry name" value="Concanavalin A-like lectins/glucanases"/>
    <property type="match status" value="1"/>
</dbReference>
<dbReference type="PROSITE" id="PS51461">
    <property type="entry name" value="NC1_FIB"/>
    <property type="match status" value="1"/>
</dbReference>
<evidence type="ECO:0000250" key="1"/>
<evidence type="ECO:0000255" key="2"/>
<evidence type="ECO:0000255" key="3">
    <source>
        <dbReference type="PROSITE-ProRule" id="PRU00793"/>
    </source>
</evidence>
<evidence type="ECO:0000256" key="4">
    <source>
        <dbReference type="SAM" id="MobiDB-lite"/>
    </source>
</evidence>
<evidence type="ECO:0000269" key="5">
    <source>
    </source>
</evidence>
<feature type="signal peptide" evidence="2">
    <location>
        <begin position="1"/>
        <end position="30"/>
    </location>
</feature>
<feature type="chain" id="PRO_0000041762" description="Collagen alpha-1(V) chain">
    <location>
        <begin position="31"/>
        <end position="1840"/>
    </location>
</feature>
<feature type="domain" description="Laminin G-like">
    <location>
        <begin position="72"/>
        <end position="244"/>
    </location>
</feature>
<feature type="domain" description="Fibrillar collagen NC1" evidence="3">
    <location>
        <begin position="1611"/>
        <end position="1839"/>
    </location>
</feature>
<feature type="region of interest" description="Nonhelical region" evidence="1">
    <location>
        <begin position="231"/>
        <end position="445"/>
    </location>
</feature>
<feature type="region of interest" description="Disordered" evidence="4">
    <location>
        <begin position="241"/>
        <end position="547"/>
    </location>
</feature>
<feature type="region of interest" description="Interrupted collagenous region" evidence="1">
    <location>
        <begin position="446"/>
        <end position="560"/>
    </location>
</feature>
<feature type="region of interest" description="Disordered" evidence="4">
    <location>
        <begin position="561"/>
        <end position="1576"/>
    </location>
</feature>
<feature type="region of interest" description="Triple-helical region" evidence="1">
    <location>
        <begin position="561"/>
        <end position="1572"/>
    </location>
</feature>
<feature type="region of interest" description="Nonhelical region" evidence="1">
    <location>
        <begin position="1573"/>
        <end position="1607"/>
    </location>
</feature>
<feature type="compositionally biased region" description="Acidic residues" evidence="4">
    <location>
        <begin position="258"/>
        <end position="268"/>
    </location>
</feature>
<feature type="compositionally biased region" description="Low complexity" evidence="4">
    <location>
        <begin position="335"/>
        <end position="352"/>
    </location>
</feature>
<feature type="compositionally biased region" description="Low complexity" evidence="4">
    <location>
        <begin position="375"/>
        <end position="387"/>
    </location>
</feature>
<feature type="compositionally biased region" description="Low complexity" evidence="4">
    <location>
        <begin position="462"/>
        <end position="471"/>
    </location>
</feature>
<feature type="compositionally biased region" description="Pro residues" evidence="4">
    <location>
        <begin position="472"/>
        <end position="487"/>
    </location>
</feature>
<feature type="compositionally biased region" description="Low complexity" evidence="4">
    <location>
        <begin position="508"/>
        <end position="525"/>
    </location>
</feature>
<feature type="compositionally biased region" description="Low complexity" evidence="4">
    <location>
        <begin position="561"/>
        <end position="572"/>
    </location>
</feature>
<feature type="compositionally biased region" description="Low complexity" evidence="4">
    <location>
        <begin position="673"/>
        <end position="688"/>
    </location>
</feature>
<feature type="compositionally biased region" description="Pro residues" evidence="4">
    <location>
        <begin position="689"/>
        <end position="698"/>
    </location>
</feature>
<feature type="compositionally biased region" description="Low complexity" evidence="4">
    <location>
        <begin position="724"/>
        <end position="743"/>
    </location>
</feature>
<feature type="compositionally biased region" description="Low complexity" evidence="4">
    <location>
        <begin position="749"/>
        <end position="758"/>
    </location>
</feature>
<feature type="compositionally biased region" description="Basic and acidic residues" evidence="4">
    <location>
        <begin position="839"/>
        <end position="848"/>
    </location>
</feature>
<feature type="compositionally biased region" description="Low complexity" evidence="4">
    <location>
        <begin position="910"/>
        <end position="919"/>
    </location>
</feature>
<feature type="compositionally biased region" description="Low complexity" evidence="4">
    <location>
        <begin position="973"/>
        <end position="992"/>
    </location>
</feature>
<feature type="compositionally biased region" description="Low complexity" evidence="4">
    <location>
        <begin position="1001"/>
        <end position="1013"/>
    </location>
</feature>
<feature type="compositionally biased region" description="Low complexity" evidence="4">
    <location>
        <begin position="1090"/>
        <end position="1106"/>
    </location>
</feature>
<feature type="compositionally biased region" description="Pro residues" evidence="4">
    <location>
        <begin position="1108"/>
        <end position="1117"/>
    </location>
</feature>
<feature type="compositionally biased region" description="Low complexity" evidence="4">
    <location>
        <begin position="1261"/>
        <end position="1270"/>
    </location>
</feature>
<feature type="compositionally biased region" description="Gly residues" evidence="4">
    <location>
        <begin position="1296"/>
        <end position="1305"/>
    </location>
</feature>
<feature type="compositionally biased region" description="Pro residues" evidence="4">
    <location>
        <begin position="1382"/>
        <end position="1400"/>
    </location>
</feature>
<feature type="compositionally biased region" description="Pro residues" evidence="4">
    <location>
        <begin position="1456"/>
        <end position="1471"/>
    </location>
</feature>
<feature type="compositionally biased region" description="Low complexity" evidence="4">
    <location>
        <begin position="1487"/>
        <end position="1496"/>
    </location>
</feature>
<feature type="compositionally biased region" description="Pro residues" evidence="4">
    <location>
        <begin position="1528"/>
        <end position="1543"/>
    </location>
</feature>
<feature type="compositionally biased region" description="Low complexity" evidence="4">
    <location>
        <begin position="1544"/>
        <end position="1556"/>
    </location>
</feature>
<feature type="modified residue" description="Sulfotyrosine" evidence="2">
    <location>
        <position position="234"/>
    </location>
</feature>
<feature type="modified residue" description="Sulfotyrosine" evidence="2">
    <location>
        <position position="236"/>
    </location>
</feature>
<feature type="modified residue" description="Sulfotyrosine" evidence="2">
    <location>
        <position position="240"/>
    </location>
</feature>
<feature type="modified residue" description="Sulfotyrosine" evidence="2">
    <location>
        <position position="262"/>
    </location>
</feature>
<feature type="modified residue" description="Sulfotyrosine" evidence="2">
    <location>
        <position position="263"/>
    </location>
</feature>
<feature type="modified residue" description="Sulfotyrosine" evidence="2">
    <location>
        <position position="336"/>
    </location>
</feature>
<feature type="modified residue" description="Sulfotyrosine" evidence="2">
    <location>
        <position position="338"/>
    </location>
</feature>
<feature type="modified residue" description="Sulfotyrosine" evidence="2">
    <location>
        <position position="344"/>
    </location>
</feature>
<feature type="modified residue" description="4-hydroxyproline" evidence="1">
    <location>
        <position position="572"/>
    </location>
</feature>
<feature type="modified residue" description="4-hydroxyproline" evidence="1">
    <location>
        <position position="578"/>
    </location>
</feature>
<feature type="modified residue" description="4-hydroxyproline" evidence="1">
    <location>
        <position position="623"/>
    </location>
</feature>
<feature type="modified residue" description="5-hydroxylysine" evidence="1">
    <location>
        <position position="629"/>
    </location>
</feature>
<feature type="modified residue" description="4-hydroxyproline" evidence="1">
    <location>
        <position position="641"/>
    </location>
</feature>
<feature type="modified residue" description="5-hydroxylysine" evidence="1">
    <location>
        <position position="644"/>
    </location>
</feature>
<feature type="modified residue" description="4-hydroxyproline" evidence="1">
    <location>
        <position position="650"/>
    </location>
</feature>
<feature type="modified residue" description="4-hydroxyproline" evidence="1">
    <location>
        <position position="656"/>
    </location>
</feature>
<feature type="modified residue" description="4-hydroxyproline" evidence="1">
    <location>
        <position position="659"/>
    </location>
</feature>
<feature type="modified residue" description="4-hydroxyproline" evidence="1">
    <location>
        <position position="677"/>
    </location>
</feature>
<feature type="modified residue" description="4-hydroxyproline" evidence="1">
    <location>
        <position position="680"/>
    </location>
</feature>
<feature type="modified residue" description="3-hydroxyproline" evidence="1">
    <location>
        <position position="682"/>
    </location>
</feature>
<feature type="modified residue" description="3-hydroxyproline" evidence="1">
    <location>
        <position position="688"/>
    </location>
</feature>
<feature type="modified residue" description="4-hydroxyproline" evidence="1">
    <location>
        <position position="692"/>
    </location>
</feature>
<feature type="modified residue" description="4-hydroxyproline" evidence="1">
    <location>
        <position position="698"/>
    </location>
</feature>
<feature type="modified residue" description="4-hydroxyproline" evidence="1">
    <location>
        <position position="707"/>
    </location>
</feature>
<feature type="modified residue" description="5-hydroxylysine" evidence="1">
    <location>
        <position position="710"/>
    </location>
</feature>
<feature type="modified residue" description="4-hydroxyproline" evidence="1">
    <location>
        <position position="719"/>
    </location>
</feature>
<feature type="modified residue" description="4-hydroxyproline" evidence="1">
    <location>
        <position position="722"/>
    </location>
</feature>
<feature type="modified residue" description="4-hydroxyproline" evidence="1">
    <location>
        <position position="728"/>
    </location>
</feature>
<feature type="modified residue" description="4-hydroxyproline" evidence="1">
    <location>
        <position position="734"/>
    </location>
</feature>
<feature type="modified residue" description="5-hydroxylysine" evidence="1">
    <location>
        <position position="746"/>
    </location>
</feature>
<feature type="modified residue" description="4-hydroxyproline" evidence="1">
    <location>
        <position position="752"/>
    </location>
</feature>
<feature type="modified residue" description="4-hydroxyproline" evidence="1">
    <location>
        <position position="758"/>
    </location>
</feature>
<feature type="modified residue" description="4-hydroxyproline" evidence="1">
    <location>
        <position position="764"/>
    </location>
</feature>
<feature type="modified residue" description="4-hydroxyproline" evidence="1">
    <location>
        <position position="767"/>
    </location>
</feature>
<feature type="modified residue" description="4-hydroxyproline" evidence="1">
    <location>
        <position position="773"/>
    </location>
</feature>
<feature type="modified residue" description="5-hydroxylysine" evidence="1">
    <location>
        <position position="776"/>
    </location>
</feature>
<feature type="modified residue" description="4-hydroxyproline" evidence="1">
    <location>
        <position position="782"/>
    </location>
</feature>
<feature type="modified residue" description="4-hydroxyproline" evidence="1">
    <location>
        <position position="791"/>
    </location>
</feature>
<feature type="modified residue" description="5-hydroxylysine" evidence="1">
    <location>
        <position position="797"/>
    </location>
</feature>
<feature type="modified residue" description="5-hydroxylysine" evidence="1">
    <location>
        <position position="806"/>
    </location>
</feature>
<feature type="modified residue" description="5-hydroxylysine" evidence="1">
    <location>
        <position position="809"/>
    </location>
</feature>
<feature type="modified residue" description="5-hydroxylysine" evidence="1">
    <location>
        <position position="812"/>
    </location>
</feature>
<feature type="modified residue" description="4-hydroxyproline" evidence="1">
    <location>
        <position position="818"/>
    </location>
</feature>
<feature type="modified residue" description="5-hydroxylysine" evidence="1">
    <location>
        <position position="821"/>
    </location>
</feature>
<feature type="modified residue" description="4-hydroxyproline" evidence="1">
    <location>
        <position position="836"/>
    </location>
</feature>
<feature type="modified residue" description="5-hydroxylysine" evidence="1">
    <location>
        <position position="848"/>
    </location>
</feature>
<feature type="modified residue" description="5-hydroxylysine" evidence="1">
    <location>
        <position position="866"/>
    </location>
</feature>
<feature type="modified residue" description="4-hydroxyproline" evidence="1">
    <location>
        <position position="872"/>
    </location>
</feature>
<feature type="modified residue" description="4-hydroxyproline" evidence="1">
    <location>
        <position position="875"/>
    </location>
</feature>
<feature type="modified residue" description="4-hydroxyproline" evidence="1">
    <location>
        <position position="878"/>
    </location>
</feature>
<feature type="modified residue" description="5-hydroxylysine" evidence="1">
    <location>
        <position position="884"/>
    </location>
</feature>
<feature type="modified residue" description="4-hydroxyproline" evidence="1">
    <location>
        <position position="890"/>
    </location>
</feature>
<feature type="modified residue" description="4-hydroxyproline" evidence="1">
    <location>
        <position position="893"/>
    </location>
</feature>
<feature type="modified residue" description="5-hydroxylysine" evidence="1">
    <location>
        <position position="899"/>
    </location>
</feature>
<feature type="modified residue" description="4-hydroxyproline" evidence="1">
    <location>
        <position position="905"/>
    </location>
</feature>
<feature type="modified residue" description="4-hydroxyproline" evidence="1">
    <location>
        <position position="908"/>
    </location>
</feature>
<feature type="modified residue" description="4-hydroxyproline" evidence="1">
    <location>
        <position position="932"/>
    </location>
</feature>
<feature type="modified residue" description="4-hydroxyproline" evidence="1">
    <location>
        <position position="947"/>
    </location>
</feature>
<feature type="modified residue" description="4-hydroxyproline" evidence="1">
    <location>
        <position position="1019"/>
    </location>
</feature>
<feature type="modified residue" description="4-hydroxyproline" evidence="1">
    <location>
        <position position="1022"/>
    </location>
</feature>
<feature type="modified residue" description="4-hydroxyproline" evidence="1">
    <location>
        <position position="1025"/>
    </location>
</feature>
<feature type="modified residue" description="4-hydroxyproline" evidence="1">
    <location>
        <position position="1031"/>
    </location>
</feature>
<feature type="modified residue" description="4-hydroxyproline" evidence="1">
    <location>
        <position position="1223"/>
    </location>
</feature>
<feature type="modified residue" description="4-hydroxyproline" evidence="1">
    <location>
        <position position="1226"/>
    </location>
</feature>
<feature type="modified residue" description="4-hydroxyproline" evidence="1">
    <location>
        <position position="1469"/>
    </location>
</feature>
<feature type="modified residue" description="4-hydroxyproline" evidence="1">
    <location>
        <position position="1472"/>
    </location>
</feature>
<feature type="modified residue" description="Sulfotyrosine" evidence="2">
    <location>
        <position position="1603"/>
    </location>
</feature>
<feature type="modified residue" description="Sulfotyrosine" evidence="2">
    <location>
        <position position="1606"/>
    </location>
</feature>
<proteinExistence type="evidence at protein level"/>
<name>CO5A1_RAT</name>